<keyword id="KW-0687">Ribonucleoprotein</keyword>
<keyword id="KW-0689">Ribosomal protein</keyword>
<organism>
    <name type="scientific">Ectopseudomonas mendocina (strain ymp)</name>
    <name type="common">Pseudomonas mendocina</name>
    <dbReference type="NCBI Taxonomy" id="399739"/>
    <lineage>
        <taxon>Bacteria</taxon>
        <taxon>Pseudomonadati</taxon>
        <taxon>Pseudomonadota</taxon>
        <taxon>Gammaproteobacteria</taxon>
        <taxon>Pseudomonadales</taxon>
        <taxon>Pseudomonadaceae</taxon>
        <taxon>Ectopseudomonas</taxon>
    </lineage>
</organism>
<proteinExistence type="inferred from homology"/>
<sequence>MKTFTAKPETVKRDWFVVDAAGQTLGRLATEIASRLRGKHKPEYTPHVDTGDYIVVINAEQVRVTGAKASDKKYYSHSGFPGGIKEINFEKLIARAPERVIETAVKGMLPKNPLGRDMYRKLKVYKGAAHPHTAQQPQELKI</sequence>
<gene>
    <name evidence="1" type="primary">rplM</name>
    <name type="ordered locus">Pmen_0901</name>
</gene>
<name>RL13_ECTM1</name>
<dbReference type="EMBL" id="CP000680">
    <property type="protein sequence ID" value="ABP83669.1"/>
    <property type="molecule type" value="Genomic_DNA"/>
</dbReference>
<dbReference type="SMR" id="A4XQQ3"/>
<dbReference type="STRING" id="399739.Pmen_0901"/>
<dbReference type="KEGG" id="pmy:Pmen_0901"/>
<dbReference type="eggNOG" id="COG0102">
    <property type="taxonomic scope" value="Bacteria"/>
</dbReference>
<dbReference type="HOGENOM" id="CLU_082184_2_2_6"/>
<dbReference type="OrthoDB" id="9801330at2"/>
<dbReference type="GO" id="GO:0022625">
    <property type="term" value="C:cytosolic large ribosomal subunit"/>
    <property type="evidence" value="ECO:0007669"/>
    <property type="project" value="TreeGrafter"/>
</dbReference>
<dbReference type="GO" id="GO:0003729">
    <property type="term" value="F:mRNA binding"/>
    <property type="evidence" value="ECO:0007669"/>
    <property type="project" value="TreeGrafter"/>
</dbReference>
<dbReference type="GO" id="GO:0003735">
    <property type="term" value="F:structural constituent of ribosome"/>
    <property type="evidence" value="ECO:0007669"/>
    <property type="project" value="InterPro"/>
</dbReference>
<dbReference type="GO" id="GO:0017148">
    <property type="term" value="P:negative regulation of translation"/>
    <property type="evidence" value="ECO:0007669"/>
    <property type="project" value="TreeGrafter"/>
</dbReference>
<dbReference type="GO" id="GO:0006412">
    <property type="term" value="P:translation"/>
    <property type="evidence" value="ECO:0007669"/>
    <property type="project" value="UniProtKB-UniRule"/>
</dbReference>
<dbReference type="CDD" id="cd00392">
    <property type="entry name" value="Ribosomal_L13"/>
    <property type="match status" value="1"/>
</dbReference>
<dbReference type="FunFam" id="3.90.1180.10:FF:000001">
    <property type="entry name" value="50S ribosomal protein L13"/>
    <property type="match status" value="1"/>
</dbReference>
<dbReference type="Gene3D" id="3.90.1180.10">
    <property type="entry name" value="Ribosomal protein L13"/>
    <property type="match status" value="1"/>
</dbReference>
<dbReference type="HAMAP" id="MF_01366">
    <property type="entry name" value="Ribosomal_uL13"/>
    <property type="match status" value="1"/>
</dbReference>
<dbReference type="InterPro" id="IPR005822">
    <property type="entry name" value="Ribosomal_uL13"/>
</dbReference>
<dbReference type="InterPro" id="IPR005823">
    <property type="entry name" value="Ribosomal_uL13_bac-type"/>
</dbReference>
<dbReference type="InterPro" id="IPR023563">
    <property type="entry name" value="Ribosomal_uL13_CS"/>
</dbReference>
<dbReference type="InterPro" id="IPR036899">
    <property type="entry name" value="Ribosomal_uL13_sf"/>
</dbReference>
<dbReference type="NCBIfam" id="TIGR01066">
    <property type="entry name" value="rplM_bact"/>
    <property type="match status" value="1"/>
</dbReference>
<dbReference type="PANTHER" id="PTHR11545:SF2">
    <property type="entry name" value="LARGE RIBOSOMAL SUBUNIT PROTEIN UL13M"/>
    <property type="match status" value="1"/>
</dbReference>
<dbReference type="PANTHER" id="PTHR11545">
    <property type="entry name" value="RIBOSOMAL PROTEIN L13"/>
    <property type="match status" value="1"/>
</dbReference>
<dbReference type="Pfam" id="PF00572">
    <property type="entry name" value="Ribosomal_L13"/>
    <property type="match status" value="1"/>
</dbReference>
<dbReference type="PIRSF" id="PIRSF002181">
    <property type="entry name" value="Ribosomal_L13"/>
    <property type="match status" value="1"/>
</dbReference>
<dbReference type="SUPFAM" id="SSF52161">
    <property type="entry name" value="Ribosomal protein L13"/>
    <property type="match status" value="1"/>
</dbReference>
<dbReference type="PROSITE" id="PS00783">
    <property type="entry name" value="RIBOSOMAL_L13"/>
    <property type="match status" value="1"/>
</dbReference>
<comment type="function">
    <text evidence="1">This protein is one of the early assembly proteins of the 50S ribosomal subunit, although it is not seen to bind rRNA by itself. It is important during the early stages of 50S assembly.</text>
</comment>
<comment type="subunit">
    <text evidence="1">Part of the 50S ribosomal subunit.</text>
</comment>
<comment type="similarity">
    <text evidence="1">Belongs to the universal ribosomal protein uL13 family.</text>
</comment>
<feature type="chain" id="PRO_1000055446" description="Large ribosomal subunit protein uL13">
    <location>
        <begin position="1"/>
        <end position="142"/>
    </location>
</feature>
<accession>A4XQQ3</accession>
<reference key="1">
    <citation type="submission" date="2007-04" db="EMBL/GenBank/DDBJ databases">
        <title>Complete sequence of Pseudomonas mendocina ymp.</title>
        <authorList>
            <consortium name="US DOE Joint Genome Institute"/>
            <person name="Copeland A."/>
            <person name="Lucas S."/>
            <person name="Lapidus A."/>
            <person name="Barry K."/>
            <person name="Glavina del Rio T."/>
            <person name="Dalin E."/>
            <person name="Tice H."/>
            <person name="Pitluck S."/>
            <person name="Kiss H."/>
            <person name="Brettin T."/>
            <person name="Detter J.C."/>
            <person name="Bruce D."/>
            <person name="Han C."/>
            <person name="Schmutz J."/>
            <person name="Larimer F."/>
            <person name="Land M."/>
            <person name="Hauser L."/>
            <person name="Kyrpides N."/>
            <person name="Mikhailova N."/>
            <person name="Hersman L."/>
            <person name="Dubois J."/>
            <person name="Maurice P."/>
            <person name="Richardson P."/>
        </authorList>
    </citation>
    <scope>NUCLEOTIDE SEQUENCE [LARGE SCALE GENOMIC DNA]</scope>
    <source>
        <strain>ymp</strain>
    </source>
</reference>
<protein>
    <recommendedName>
        <fullName evidence="1">Large ribosomal subunit protein uL13</fullName>
    </recommendedName>
    <alternativeName>
        <fullName evidence="2">50S ribosomal protein L13</fullName>
    </alternativeName>
</protein>
<evidence type="ECO:0000255" key="1">
    <source>
        <dbReference type="HAMAP-Rule" id="MF_01366"/>
    </source>
</evidence>
<evidence type="ECO:0000305" key="2"/>